<dbReference type="EC" id="4.2.1.20" evidence="1"/>
<dbReference type="EMBL" id="AE015928">
    <property type="protein sequence ID" value="AAO75640.1"/>
    <property type="molecule type" value="Genomic_DNA"/>
</dbReference>
<dbReference type="RefSeq" id="NP_809446.1">
    <property type="nucleotide sequence ID" value="NC_004663.1"/>
</dbReference>
<dbReference type="RefSeq" id="WP_011107308.1">
    <property type="nucleotide sequence ID" value="NC_004663.1"/>
</dbReference>
<dbReference type="SMR" id="Q8AAD2"/>
<dbReference type="FunCoup" id="Q8AAD2">
    <property type="interactions" value="536"/>
</dbReference>
<dbReference type="STRING" id="226186.BT_0533"/>
<dbReference type="PaxDb" id="226186-BT_0533"/>
<dbReference type="EnsemblBacteria" id="AAO75640">
    <property type="protein sequence ID" value="AAO75640"/>
    <property type="gene ID" value="BT_0533"/>
</dbReference>
<dbReference type="GeneID" id="60926492"/>
<dbReference type="KEGG" id="bth:BT_0533"/>
<dbReference type="PATRIC" id="fig|226186.12.peg.533"/>
<dbReference type="eggNOG" id="COG0133">
    <property type="taxonomic scope" value="Bacteria"/>
</dbReference>
<dbReference type="HOGENOM" id="CLU_016734_3_1_10"/>
<dbReference type="InParanoid" id="Q8AAD2"/>
<dbReference type="OrthoDB" id="9766131at2"/>
<dbReference type="UniPathway" id="UPA00035">
    <property type="reaction ID" value="UER00044"/>
</dbReference>
<dbReference type="Proteomes" id="UP000001414">
    <property type="component" value="Chromosome"/>
</dbReference>
<dbReference type="GO" id="GO:0005737">
    <property type="term" value="C:cytoplasm"/>
    <property type="evidence" value="ECO:0000318"/>
    <property type="project" value="GO_Central"/>
</dbReference>
<dbReference type="GO" id="GO:0004834">
    <property type="term" value="F:tryptophan synthase activity"/>
    <property type="evidence" value="ECO:0007669"/>
    <property type="project" value="UniProtKB-UniRule"/>
</dbReference>
<dbReference type="GO" id="GO:0000162">
    <property type="term" value="P:L-tryptophan biosynthetic process"/>
    <property type="evidence" value="ECO:0000318"/>
    <property type="project" value="GO_Central"/>
</dbReference>
<dbReference type="CDD" id="cd06446">
    <property type="entry name" value="Trp-synth_B"/>
    <property type="match status" value="1"/>
</dbReference>
<dbReference type="FunFam" id="3.40.50.1100:FF:000001">
    <property type="entry name" value="Tryptophan synthase beta chain"/>
    <property type="match status" value="1"/>
</dbReference>
<dbReference type="FunFam" id="3.40.50.1100:FF:000004">
    <property type="entry name" value="Tryptophan synthase beta chain"/>
    <property type="match status" value="1"/>
</dbReference>
<dbReference type="Gene3D" id="3.40.50.1100">
    <property type="match status" value="2"/>
</dbReference>
<dbReference type="HAMAP" id="MF_00133">
    <property type="entry name" value="Trp_synth_beta"/>
    <property type="match status" value="1"/>
</dbReference>
<dbReference type="InterPro" id="IPR006653">
    <property type="entry name" value="Trp_synth_b_CS"/>
</dbReference>
<dbReference type="InterPro" id="IPR006654">
    <property type="entry name" value="Trp_synth_beta"/>
</dbReference>
<dbReference type="InterPro" id="IPR023026">
    <property type="entry name" value="Trp_synth_beta/beta-like"/>
</dbReference>
<dbReference type="InterPro" id="IPR001926">
    <property type="entry name" value="TrpB-like_PALP"/>
</dbReference>
<dbReference type="InterPro" id="IPR036052">
    <property type="entry name" value="TrpB-like_PALP_sf"/>
</dbReference>
<dbReference type="NCBIfam" id="TIGR00263">
    <property type="entry name" value="trpB"/>
    <property type="match status" value="1"/>
</dbReference>
<dbReference type="PANTHER" id="PTHR48077:SF3">
    <property type="entry name" value="TRYPTOPHAN SYNTHASE"/>
    <property type="match status" value="1"/>
</dbReference>
<dbReference type="PANTHER" id="PTHR48077">
    <property type="entry name" value="TRYPTOPHAN SYNTHASE-RELATED"/>
    <property type="match status" value="1"/>
</dbReference>
<dbReference type="Pfam" id="PF00291">
    <property type="entry name" value="PALP"/>
    <property type="match status" value="1"/>
</dbReference>
<dbReference type="PIRSF" id="PIRSF001413">
    <property type="entry name" value="Trp_syn_beta"/>
    <property type="match status" value="1"/>
</dbReference>
<dbReference type="SUPFAM" id="SSF53686">
    <property type="entry name" value="Tryptophan synthase beta subunit-like PLP-dependent enzymes"/>
    <property type="match status" value="1"/>
</dbReference>
<dbReference type="PROSITE" id="PS00168">
    <property type="entry name" value="TRP_SYNTHASE_BETA"/>
    <property type="match status" value="1"/>
</dbReference>
<sequence length="394" mass="43275">MKSFLVDQDGYYGEFGGAYVPEILHKCVEELKNTYLGVLESEDFKKEFDQLLRDYVGRPSPLYLARRLSEKYGCKMYLKREDLNHTGAHKINNTIGQILLARRMGKKRIIAETGAGQHGVATATVCALMDMECIVYMGKTDVERQHINVEKMKMLGATVIPVTSGNMTLKDATNEAIRDWCCHPADTYYIIGSTVGPHPYPDMVARLQSVISEEIKKQLMEKEGRDHPDYLIACVGGGSNAAGTIYHYINDGRVGIILAEAGGKGIETGMTAATIQLGKMGIIHGARTYVIQNEDGQIEEPYSISAGLDYPGIGPIHANLAAQRRATVLAVNDDEAIEAAYELTKLEGIIPALESAHALGALKKLKFKPEDVVVLTVSGRGDKDIETYLSFNEK</sequence>
<proteinExistence type="inferred from homology"/>
<evidence type="ECO:0000255" key="1">
    <source>
        <dbReference type="HAMAP-Rule" id="MF_00133"/>
    </source>
</evidence>
<accession>Q8AAD2</accession>
<feature type="chain" id="PRO_0000098919" description="Tryptophan synthase beta chain">
    <location>
        <begin position="1"/>
        <end position="394"/>
    </location>
</feature>
<feature type="modified residue" description="N6-(pyridoxal phosphate)lysine" evidence="1">
    <location>
        <position position="90"/>
    </location>
</feature>
<comment type="function">
    <text evidence="1">The beta subunit is responsible for the synthesis of L-tryptophan from indole and L-serine.</text>
</comment>
<comment type="catalytic activity">
    <reaction evidence="1">
        <text>(1S,2R)-1-C-(indol-3-yl)glycerol 3-phosphate + L-serine = D-glyceraldehyde 3-phosphate + L-tryptophan + H2O</text>
        <dbReference type="Rhea" id="RHEA:10532"/>
        <dbReference type="ChEBI" id="CHEBI:15377"/>
        <dbReference type="ChEBI" id="CHEBI:33384"/>
        <dbReference type="ChEBI" id="CHEBI:57912"/>
        <dbReference type="ChEBI" id="CHEBI:58866"/>
        <dbReference type="ChEBI" id="CHEBI:59776"/>
        <dbReference type="EC" id="4.2.1.20"/>
    </reaction>
</comment>
<comment type="cofactor">
    <cofactor evidence="1">
        <name>pyridoxal 5'-phosphate</name>
        <dbReference type="ChEBI" id="CHEBI:597326"/>
    </cofactor>
</comment>
<comment type="pathway">
    <text evidence="1">Amino-acid biosynthesis; L-tryptophan biosynthesis; L-tryptophan from chorismate: step 5/5.</text>
</comment>
<comment type="subunit">
    <text evidence="1">Tetramer of two alpha and two beta chains.</text>
</comment>
<comment type="similarity">
    <text evidence="1">Belongs to the TrpB family.</text>
</comment>
<reference key="1">
    <citation type="journal article" date="2003" name="Science">
        <title>A genomic view of the human-Bacteroides thetaiotaomicron symbiosis.</title>
        <authorList>
            <person name="Xu J."/>
            <person name="Bjursell M.K."/>
            <person name="Himrod J."/>
            <person name="Deng S."/>
            <person name="Carmichael L.K."/>
            <person name="Chiang H.C."/>
            <person name="Hooper L.V."/>
            <person name="Gordon J.I."/>
        </authorList>
    </citation>
    <scope>NUCLEOTIDE SEQUENCE [LARGE SCALE GENOMIC DNA]</scope>
    <source>
        <strain>ATCC 29148 / DSM 2079 / JCM 5827 / CCUG 10774 / NCTC 10582 / VPI-5482 / E50</strain>
    </source>
</reference>
<gene>
    <name evidence="1" type="primary">trpB</name>
    <name type="ordered locus">BT_0533</name>
</gene>
<keyword id="KW-0028">Amino-acid biosynthesis</keyword>
<keyword id="KW-0057">Aromatic amino acid biosynthesis</keyword>
<keyword id="KW-0456">Lyase</keyword>
<keyword id="KW-0663">Pyridoxal phosphate</keyword>
<keyword id="KW-1185">Reference proteome</keyword>
<keyword id="KW-0822">Tryptophan biosynthesis</keyword>
<name>TRPB_BACTN</name>
<organism>
    <name type="scientific">Bacteroides thetaiotaomicron (strain ATCC 29148 / DSM 2079 / JCM 5827 / CCUG 10774 / NCTC 10582 / VPI-5482 / E50)</name>
    <dbReference type="NCBI Taxonomy" id="226186"/>
    <lineage>
        <taxon>Bacteria</taxon>
        <taxon>Pseudomonadati</taxon>
        <taxon>Bacteroidota</taxon>
        <taxon>Bacteroidia</taxon>
        <taxon>Bacteroidales</taxon>
        <taxon>Bacteroidaceae</taxon>
        <taxon>Bacteroides</taxon>
    </lineage>
</organism>
<protein>
    <recommendedName>
        <fullName evidence="1">Tryptophan synthase beta chain</fullName>
        <ecNumber evidence="1">4.2.1.20</ecNumber>
    </recommendedName>
</protein>